<comment type="function">
    <text evidence="3">Converts guanidinoacetate to creatine, using S-adenosylmethionine as the methyl donor. Important in nervous system development.</text>
</comment>
<comment type="catalytic activity">
    <reaction evidence="4">
        <text>guanidinoacetate + S-adenosyl-L-methionine = creatine + S-adenosyl-L-homocysteine + H(+)</text>
        <dbReference type="Rhea" id="RHEA:10656"/>
        <dbReference type="ChEBI" id="CHEBI:15378"/>
        <dbReference type="ChEBI" id="CHEBI:57742"/>
        <dbReference type="ChEBI" id="CHEBI:57856"/>
        <dbReference type="ChEBI" id="CHEBI:57947"/>
        <dbReference type="ChEBI" id="CHEBI:59789"/>
        <dbReference type="EC" id="2.1.1.2"/>
    </reaction>
</comment>
<comment type="pathway">
    <text>Amine and polyamine biosynthesis; creatine biosynthesis; creatine from L-arginine and glycine: step 2/2.</text>
</comment>
<comment type="subunit">
    <text evidence="1">Monomer.</text>
</comment>
<comment type="similarity">
    <text evidence="4">Belongs to the class I-like SAM-binding methyltransferase superfamily. RMT2 methyltransferase family.</text>
</comment>
<protein>
    <recommendedName>
        <fullName>Guanidinoacetate N-methyltransferase</fullName>
        <ecNumber>2.1.1.2</ecNumber>
    </recommendedName>
</protein>
<dbReference type="EC" id="2.1.1.2"/>
<dbReference type="EMBL" id="CR760866">
    <property type="protein sequence ID" value="CAJ82893.1"/>
    <property type="molecule type" value="mRNA"/>
</dbReference>
<dbReference type="EMBL" id="BC059738">
    <property type="protein sequence ID" value="AAH59738.1"/>
    <property type="molecule type" value="mRNA"/>
</dbReference>
<dbReference type="RefSeq" id="NP_988896.1">
    <property type="nucleotide sequence ID" value="NM_203565.1"/>
</dbReference>
<dbReference type="SMR" id="Q6PBF6"/>
<dbReference type="FunCoup" id="Q6PBF6">
    <property type="interactions" value="1479"/>
</dbReference>
<dbReference type="STRING" id="8364.ENSXETP00000001962"/>
<dbReference type="PaxDb" id="8364-ENSXETP00000008001"/>
<dbReference type="DNASU" id="394491"/>
<dbReference type="GeneID" id="394491"/>
<dbReference type="KEGG" id="xtr:394491"/>
<dbReference type="AGR" id="Xenbase:XB-GENE-947462"/>
<dbReference type="CTD" id="2593"/>
<dbReference type="Xenbase" id="XB-GENE-947462">
    <property type="gene designation" value="gamt"/>
</dbReference>
<dbReference type="eggNOG" id="KOG1709">
    <property type="taxonomic scope" value="Eukaryota"/>
</dbReference>
<dbReference type="InParanoid" id="Q6PBF6"/>
<dbReference type="OMA" id="HKMITPT"/>
<dbReference type="OrthoDB" id="19014at2759"/>
<dbReference type="Reactome" id="R-XTR-71288">
    <property type="pathway name" value="Creatine metabolism"/>
</dbReference>
<dbReference type="UniPathway" id="UPA00104">
    <property type="reaction ID" value="UER00580"/>
</dbReference>
<dbReference type="Proteomes" id="UP000008143">
    <property type="component" value="Chromosome 1"/>
</dbReference>
<dbReference type="Bgee" id="ENSXETG00000003703">
    <property type="expression patterns" value="Expressed in skeletal muscle tissue and 18 other cell types or tissues"/>
</dbReference>
<dbReference type="GO" id="GO:0030731">
    <property type="term" value="F:guanidinoacetate N-methyltransferase activity"/>
    <property type="evidence" value="ECO:0007669"/>
    <property type="project" value="UniProtKB-EC"/>
</dbReference>
<dbReference type="GO" id="GO:0006601">
    <property type="term" value="P:creatine biosynthetic process"/>
    <property type="evidence" value="ECO:0007669"/>
    <property type="project" value="UniProtKB-UniPathway"/>
</dbReference>
<dbReference type="GO" id="GO:0032259">
    <property type="term" value="P:methylation"/>
    <property type="evidence" value="ECO:0007669"/>
    <property type="project" value="UniProtKB-KW"/>
</dbReference>
<dbReference type="CDD" id="cd02440">
    <property type="entry name" value="AdoMet_MTases"/>
    <property type="match status" value="1"/>
</dbReference>
<dbReference type="FunFam" id="3.40.50.150:FF:000096">
    <property type="entry name" value="Guanidinoacetate N-methyltransferase"/>
    <property type="match status" value="1"/>
</dbReference>
<dbReference type="Gene3D" id="3.40.50.150">
    <property type="entry name" value="Vaccinia Virus protein VP39"/>
    <property type="match status" value="1"/>
</dbReference>
<dbReference type="InterPro" id="IPR016550">
    <property type="entry name" value="GuanidinoAc_N-MeTrfase"/>
</dbReference>
<dbReference type="InterPro" id="IPR051038">
    <property type="entry name" value="RMT2/GAMT_Mtase"/>
</dbReference>
<dbReference type="InterPro" id="IPR026480">
    <property type="entry name" value="RMT2_dom"/>
</dbReference>
<dbReference type="InterPro" id="IPR029063">
    <property type="entry name" value="SAM-dependent_MTases_sf"/>
</dbReference>
<dbReference type="PANTHER" id="PTHR32379">
    <property type="entry name" value="GUANIDINOACETATE N-METHYLTRANSFERASE"/>
    <property type="match status" value="1"/>
</dbReference>
<dbReference type="PANTHER" id="PTHR32379:SF1">
    <property type="entry name" value="GUANIDINOACETATE N-METHYLTRANSFERASE"/>
    <property type="match status" value="1"/>
</dbReference>
<dbReference type="PIRSF" id="PIRSF009285">
    <property type="entry name" value="GAMT"/>
    <property type="match status" value="1"/>
</dbReference>
<dbReference type="SUPFAM" id="SSF53335">
    <property type="entry name" value="S-adenosyl-L-methionine-dependent methyltransferases"/>
    <property type="match status" value="1"/>
</dbReference>
<dbReference type="PROSITE" id="PS51559">
    <property type="entry name" value="SAM_RMT2"/>
    <property type="match status" value="1"/>
</dbReference>
<organism>
    <name type="scientific">Xenopus tropicalis</name>
    <name type="common">Western clawed frog</name>
    <name type="synonym">Silurana tropicalis</name>
    <dbReference type="NCBI Taxonomy" id="8364"/>
    <lineage>
        <taxon>Eukaryota</taxon>
        <taxon>Metazoa</taxon>
        <taxon>Chordata</taxon>
        <taxon>Craniata</taxon>
        <taxon>Vertebrata</taxon>
        <taxon>Euteleostomi</taxon>
        <taxon>Amphibia</taxon>
        <taxon>Batrachia</taxon>
        <taxon>Anura</taxon>
        <taxon>Pipoidea</taxon>
        <taxon>Pipidae</taxon>
        <taxon>Xenopodinae</taxon>
        <taxon>Xenopus</taxon>
        <taxon>Silurana</taxon>
    </lineage>
</organism>
<gene>
    <name type="primary">gamt</name>
    <name type="ORF">TTpA001k07.1</name>
</gene>
<accession>Q6PBF6</accession>
<accession>Q28HJ0</accession>
<name>GAMT_XENTR</name>
<keyword id="KW-0489">Methyltransferase</keyword>
<keyword id="KW-1185">Reference proteome</keyword>
<keyword id="KW-0949">S-adenosyl-L-methionine</keyword>
<keyword id="KW-0808">Transferase</keyword>
<reference key="1">
    <citation type="submission" date="2006-03" db="EMBL/GenBank/DDBJ databases">
        <authorList>
            <consortium name="Sanger Xenopus tropicalis EST/cDNA project"/>
        </authorList>
    </citation>
    <scope>NUCLEOTIDE SEQUENCE [LARGE SCALE MRNA]</scope>
    <source>
        <tissue>Tadpole</tissue>
    </source>
</reference>
<reference key="2">
    <citation type="submission" date="2003-10" db="EMBL/GenBank/DDBJ databases">
        <authorList>
            <consortium name="NIH - Xenopus Gene Collection (XGC) project"/>
        </authorList>
    </citation>
    <scope>NUCLEOTIDE SEQUENCE [LARGE SCALE MRNA]</scope>
    <source>
        <tissue>Embryo</tissue>
    </source>
</reference>
<proteinExistence type="evidence at transcript level"/>
<feature type="chain" id="PRO_0000228968" description="Guanidinoacetate N-methyltransferase">
    <location>
        <begin position="1"/>
        <end position="232"/>
    </location>
</feature>
<feature type="domain" description="RMT2" evidence="4">
    <location>
        <begin position="1"/>
        <end position="232"/>
    </location>
</feature>
<feature type="binding site" evidence="4">
    <location>
        <position position="16"/>
    </location>
    <ligand>
        <name>S-adenosyl-L-methionine</name>
        <dbReference type="ChEBI" id="CHEBI:59789"/>
    </ligand>
</feature>
<feature type="binding site" evidence="2 4">
    <location>
        <position position="38"/>
    </location>
    <ligand>
        <name>guanidinoacetate</name>
        <dbReference type="ChEBI" id="CHEBI:57742"/>
    </ligand>
</feature>
<feature type="binding site" evidence="2 4">
    <location>
        <position position="42"/>
    </location>
    <ligand>
        <name>guanidinoacetate</name>
        <dbReference type="ChEBI" id="CHEBI:57742"/>
    </ligand>
</feature>
<feature type="binding site" evidence="4">
    <location>
        <position position="46"/>
    </location>
    <ligand>
        <name>S-adenosyl-L-methionine</name>
        <dbReference type="ChEBI" id="CHEBI:59789"/>
    </ligand>
</feature>
<feature type="binding site" evidence="4">
    <location>
        <begin position="65"/>
        <end position="70"/>
    </location>
    <ligand>
        <name>S-adenosyl-L-methionine</name>
        <dbReference type="ChEBI" id="CHEBI:59789"/>
    </ligand>
</feature>
<feature type="binding site" evidence="4">
    <location>
        <begin position="86"/>
        <end position="88"/>
    </location>
    <ligand>
        <name>S-adenosyl-L-methionine</name>
        <dbReference type="ChEBI" id="CHEBI:59789"/>
    </ligand>
</feature>
<feature type="binding site" evidence="4">
    <location>
        <begin position="113"/>
        <end position="114"/>
    </location>
    <ligand>
        <name>S-adenosyl-L-methionine</name>
        <dbReference type="ChEBI" id="CHEBI:59789"/>
    </ligand>
</feature>
<feature type="binding site" evidence="2">
    <location>
        <position position="131"/>
    </location>
    <ligand>
        <name>guanidinoacetate</name>
        <dbReference type="ChEBI" id="CHEBI:57742"/>
    </ligand>
</feature>
<feature type="binding site" evidence="4">
    <location>
        <position position="131"/>
    </location>
    <ligand>
        <name>S-adenosyl-L-methionine</name>
        <dbReference type="ChEBI" id="CHEBI:59789"/>
    </ligand>
</feature>
<feature type="binding site" evidence="2">
    <location>
        <begin position="167"/>
        <end position="168"/>
    </location>
    <ligand>
        <name>guanidinoacetate</name>
        <dbReference type="ChEBI" id="CHEBI:57742"/>
    </ligand>
</feature>
<sequence length="232" mass="26575">MSERIFIEGESCKSAWHNATAGYDDTDTHLEILGKPVMERWETPYMHSLASVAASKGGRVLEIGFGMAIAATKLEEYNIEEHWIIECNDGVFKRLQEWATKQPHKIVPLKGLWEDVVPTLPDGHFDGILYDTYPLSEETWHTHQFNFIKGHAYRLLKPGGVLTYCNLTSWGELLKAKYNDIEKMFQETQIPQLVDAGFKSENISTTVMDLIPPEDCRYYSFKKMITPTIIKV</sequence>
<evidence type="ECO:0000250" key="1"/>
<evidence type="ECO:0000250" key="2">
    <source>
        <dbReference type="UniProtKB" id="P10868"/>
    </source>
</evidence>
<evidence type="ECO:0000250" key="3">
    <source>
        <dbReference type="UniProtKB" id="Q14353"/>
    </source>
</evidence>
<evidence type="ECO:0000255" key="4">
    <source>
        <dbReference type="PROSITE-ProRule" id="PRU00892"/>
    </source>
</evidence>